<keyword id="KW-0002">3D-structure</keyword>
<keyword id="KW-0028">Amino-acid biosynthesis</keyword>
<keyword id="KW-0067">ATP-binding</keyword>
<keyword id="KW-0963">Cytoplasm</keyword>
<keyword id="KW-0903">Direct protein sequencing</keyword>
<keyword id="KW-0418">Kinase</keyword>
<keyword id="KW-0547">Nucleotide-binding</keyword>
<keyword id="KW-0641">Proline biosynthesis</keyword>
<keyword id="KW-1185">Reference proteome</keyword>
<keyword id="KW-0808">Transferase</keyword>
<organism>
    <name type="scientific">Escherichia coli (strain K12)</name>
    <dbReference type="NCBI Taxonomy" id="83333"/>
    <lineage>
        <taxon>Bacteria</taxon>
        <taxon>Pseudomonadati</taxon>
        <taxon>Pseudomonadota</taxon>
        <taxon>Gammaproteobacteria</taxon>
        <taxon>Enterobacterales</taxon>
        <taxon>Enterobacteriaceae</taxon>
        <taxon>Escherichia</taxon>
    </lineage>
</organism>
<sequence length="367" mass="39057">MSDSQTLVVKLGTSVLTGGSRRLNRAHIVELVRQCAQLHAAGHRIVIVTSGAIAAGREHLGYPELPATIASKQLLAAVGQSRLIQLWEQLFSIYGIHVGQMLLTRADMEDRERFLNARDTLRALLDNNIVPVINENDAVATAEIKVGDNDNLSALAAILAGADKLLLLTDQKGLYTADPRSNPQAELIKDVYGIDDALRAIAGDSVSGLGTGGMSTKLQAADVACRAGIDTIIAAGSKPGVIGDVMEGISVGTLFHAQATPLENRKRWIFGAPPAGEITVDEGATAAILERGSSLLPKGIKSVTGNFSRGEVIRICNLEGRDIAHGVSRYNSDALRRIAGHHSQEIDAILGYEYGPVAVHRDDMITR</sequence>
<proteinExistence type="evidence at protein level"/>
<dbReference type="EC" id="2.7.2.11" evidence="1"/>
<dbReference type="EMBL" id="X00786">
    <property type="protein sequence ID" value="CAA25363.1"/>
    <property type="molecule type" value="Genomic_DNA"/>
</dbReference>
<dbReference type="EMBL" id="U70214">
    <property type="protein sequence ID" value="AAB08662.1"/>
    <property type="molecule type" value="Genomic_DNA"/>
</dbReference>
<dbReference type="EMBL" id="U00096">
    <property type="protein sequence ID" value="AAC73346.1"/>
    <property type="molecule type" value="Genomic_DNA"/>
</dbReference>
<dbReference type="EMBL" id="AP009048">
    <property type="protein sequence ID" value="BAA77911.2"/>
    <property type="molecule type" value="Genomic_DNA"/>
</dbReference>
<dbReference type="EMBL" id="V00316">
    <property type="protein sequence ID" value="CAA23604.1"/>
    <property type="molecule type" value="Genomic_DNA"/>
</dbReference>
<dbReference type="PIR" id="C64749">
    <property type="entry name" value="KIECEG"/>
</dbReference>
<dbReference type="RefSeq" id="NP_414777.1">
    <property type="nucleotide sequence ID" value="NC_000913.3"/>
</dbReference>
<dbReference type="RefSeq" id="WP_001285288.1">
    <property type="nucleotide sequence ID" value="NZ_STEB01000020.1"/>
</dbReference>
<dbReference type="PDB" id="2J5T">
    <property type="method" value="X-ray"/>
    <property type="resolution" value="2.90 A"/>
    <property type="chains" value="A/B/C/D/E/F/G/H=1-367"/>
</dbReference>
<dbReference type="PDB" id="2J5V">
    <property type="method" value="X-ray"/>
    <property type="resolution" value="2.50 A"/>
    <property type="chains" value="A/B=1-367"/>
</dbReference>
<dbReference type="PDB" id="2W21">
    <property type="method" value="X-ray"/>
    <property type="resolution" value="2.95 A"/>
    <property type="chains" value="A=1-259"/>
</dbReference>
<dbReference type="PDB" id="8ZPJ">
    <property type="method" value="EM"/>
    <property type="resolution" value="2.97 A"/>
    <property type="chains" value="A/B/C/D/E/F/G/H=1-367"/>
</dbReference>
<dbReference type="PDB" id="8ZRI">
    <property type="method" value="EM"/>
    <property type="resolution" value="2.67 A"/>
    <property type="chains" value="A/B/C/D/E/F/G/H=1-367"/>
</dbReference>
<dbReference type="PDBsum" id="2J5T"/>
<dbReference type="PDBsum" id="2J5V"/>
<dbReference type="PDBsum" id="2W21"/>
<dbReference type="PDBsum" id="8ZPJ"/>
<dbReference type="PDBsum" id="8ZRI"/>
<dbReference type="EMDB" id="EMD-60346"/>
<dbReference type="EMDB" id="EMD-60397"/>
<dbReference type="SMR" id="P0A7B5"/>
<dbReference type="BioGRID" id="4259767">
    <property type="interactions" value="14"/>
</dbReference>
<dbReference type="FunCoup" id="P0A7B5">
    <property type="interactions" value="581"/>
</dbReference>
<dbReference type="IntAct" id="P0A7B5">
    <property type="interactions" value="2"/>
</dbReference>
<dbReference type="STRING" id="511145.b0242"/>
<dbReference type="ChEMBL" id="CHEMBL5169221"/>
<dbReference type="jPOST" id="P0A7B5"/>
<dbReference type="PaxDb" id="511145-b0242"/>
<dbReference type="EnsemblBacteria" id="AAC73346">
    <property type="protein sequence ID" value="AAC73346"/>
    <property type="gene ID" value="b0242"/>
</dbReference>
<dbReference type="GeneID" id="93777151"/>
<dbReference type="GeneID" id="946425"/>
<dbReference type="KEGG" id="ecj:JW0232"/>
<dbReference type="KEGG" id="eco:b0242"/>
<dbReference type="KEGG" id="ecoc:C3026_01150"/>
<dbReference type="KEGG" id="ecoc:C3026_23885"/>
<dbReference type="PATRIC" id="fig|1411691.4.peg.2041"/>
<dbReference type="EchoBASE" id="EB0761"/>
<dbReference type="eggNOG" id="COG0263">
    <property type="taxonomic scope" value="Bacteria"/>
</dbReference>
<dbReference type="HOGENOM" id="CLU_025400_2_0_6"/>
<dbReference type="InParanoid" id="P0A7B5"/>
<dbReference type="OMA" id="SVTELMF"/>
<dbReference type="OrthoDB" id="9804434at2"/>
<dbReference type="PhylomeDB" id="P0A7B5"/>
<dbReference type="BioCyc" id="EcoCyc:GLUTKIN-MONOMER"/>
<dbReference type="BioCyc" id="MetaCyc:GLUTKIN-MONOMER"/>
<dbReference type="BRENDA" id="2.7.2.11">
    <property type="organism ID" value="2026"/>
</dbReference>
<dbReference type="SABIO-RK" id="P0A7B5"/>
<dbReference type="UniPathway" id="UPA00098">
    <property type="reaction ID" value="UER00359"/>
</dbReference>
<dbReference type="EvolutionaryTrace" id="P0A7B5"/>
<dbReference type="PRO" id="PR:P0A7B5"/>
<dbReference type="Proteomes" id="UP000000625">
    <property type="component" value="Chromosome"/>
</dbReference>
<dbReference type="GO" id="GO:0005829">
    <property type="term" value="C:cytosol"/>
    <property type="evidence" value="ECO:0000314"/>
    <property type="project" value="EcoCyc"/>
</dbReference>
<dbReference type="GO" id="GO:0005524">
    <property type="term" value="F:ATP binding"/>
    <property type="evidence" value="ECO:0007669"/>
    <property type="project" value="UniProtKB-KW"/>
</dbReference>
<dbReference type="GO" id="GO:0004349">
    <property type="term" value="F:glutamate 5-kinase activity"/>
    <property type="evidence" value="ECO:0000314"/>
    <property type="project" value="EcoCyc"/>
</dbReference>
<dbReference type="GO" id="GO:0042802">
    <property type="term" value="F:identical protein binding"/>
    <property type="evidence" value="ECO:0000314"/>
    <property type="project" value="EcoCyc"/>
</dbReference>
<dbReference type="GO" id="GO:0000287">
    <property type="term" value="F:magnesium ion binding"/>
    <property type="evidence" value="ECO:0000314"/>
    <property type="project" value="EcoCyc"/>
</dbReference>
<dbReference type="GO" id="GO:1901973">
    <property type="term" value="F:proline binding"/>
    <property type="evidence" value="ECO:0000314"/>
    <property type="project" value="EcoCyc"/>
</dbReference>
<dbReference type="GO" id="GO:0042803">
    <property type="term" value="F:protein homodimerization activity"/>
    <property type="evidence" value="ECO:0000314"/>
    <property type="project" value="EcoCyc"/>
</dbReference>
<dbReference type="GO" id="GO:0003723">
    <property type="term" value="F:RNA binding"/>
    <property type="evidence" value="ECO:0007669"/>
    <property type="project" value="InterPro"/>
</dbReference>
<dbReference type="GO" id="GO:0055129">
    <property type="term" value="P:L-proline biosynthetic process"/>
    <property type="evidence" value="ECO:0000315"/>
    <property type="project" value="EcoCyc"/>
</dbReference>
<dbReference type="GO" id="GO:0006561">
    <property type="term" value="P:proline biosynthetic process"/>
    <property type="evidence" value="ECO:0000315"/>
    <property type="project" value="EcoCyc"/>
</dbReference>
<dbReference type="CDD" id="cd04242">
    <property type="entry name" value="AAK_G5K_ProB"/>
    <property type="match status" value="1"/>
</dbReference>
<dbReference type="CDD" id="cd21157">
    <property type="entry name" value="PUA_G5K"/>
    <property type="match status" value="1"/>
</dbReference>
<dbReference type="FunFam" id="2.30.130.10:FF:000003">
    <property type="entry name" value="Glutamate 5-kinase"/>
    <property type="match status" value="1"/>
</dbReference>
<dbReference type="FunFam" id="3.40.1160.10:FF:000006">
    <property type="entry name" value="Glutamate 5-kinase"/>
    <property type="match status" value="1"/>
</dbReference>
<dbReference type="Gene3D" id="3.40.1160.10">
    <property type="entry name" value="Acetylglutamate kinase-like"/>
    <property type="match status" value="2"/>
</dbReference>
<dbReference type="Gene3D" id="2.30.130.10">
    <property type="entry name" value="PUA domain"/>
    <property type="match status" value="1"/>
</dbReference>
<dbReference type="HAMAP" id="MF_00456">
    <property type="entry name" value="ProB"/>
    <property type="match status" value="1"/>
</dbReference>
<dbReference type="InterPro" id="IPR036393">
    <property type="entry name" value="AceGlu_kinase-like_sf"/>
</dbReference>
<dbReference type="InterPro" id="IPR001048">
    <property type="entry name" value="Asp/Glu/Uridylate_kinase"/>
</dbReference>
<dbReference type="InterPro" id="IPR041739">
    <property type="entry name" value="G5K_ProB"/>
</dbReference>
<dbReference type="InterPro" id="IPR001057">
    <property type="entry name" value="Glu/AcGlu_kinase"/>
</dbReference>
<dbReference type="InterPro" id="IPR011529">
    <property type="entry name" value="Glu_5kinase"/>
</dbReference>
<dbReference type="InterPro" id="IPR005715">
    <property type="entry name" value="Glu_5kinase/COase_Synthase"/>
</dbReference>
<dbReference type="InterPro" id="IPR019797">
    <property type="entry name" value="Glutamate_5-kinase_CS"/>
</dbReference>
<dbReference type="InterPro" id="IPR002478">
    <property type="entry name" value="PUA"/>
</dbReference>
<dbReference type="InterPro" id="IPR015947">
    <property type="entry name" value="PUA-like_sf"/>
</dbReference>
<dbReference type="InterPro" id="IPR036974">
    <property type="entry name" value="PUA_sf"/>
</dbReference>
<dbReference type="NCBIfam" id="TIGR01027">
    <property type="entry name" value="proB"/>
    <property type="match status" value="1"/>
</dbReference>
<dbReference type="PANTHER" id="PTHR43654">
    <property type="entry name" value="GLUTAMATE 5-KINASE"/>
    <property type="match status" value="1"/>
</dbReference>
<dbReference type="PANTHER" id="PTHR43654:SF1">
    <property type="entry name" value="ISOPENTENYL PHOSPHATE KINASE"/>
    <property type="match status" value="1"/>
</dbReference>
<dbReference type="Pfam" id="PF00696">
    <property type="entry name" value="AA_kinase"/>
    <property type="match status" value="1"/>
</dbReference>
<dbReference type="Pfam" id="PF01472">
    <property type="entry name" value="PUA"/>
    <property type="match status" value="1"/>
</dbReference>
<dbReference type="PIRSF" id="PIRSF000729">
    <property type="entry name" value="GK"/>
    <property type="match status" value="1"/>
</dbReference>
<dbReference type="PRINTS" id="PR00474">
    <property type="entry name" value="GLU5KINASE"/>
</dbReference>
<dbReference type="SMART" id="SM00359">
    <property type="entry name" value="PUA"/>
    <property type="match status" value="1"/>
</dbReference>
<dbReference type="SUPFAM" id="SSF53633">
    <property type="entry name" value="Carbamate kinase-like"/>
    <property type="match status" value="1"/>
</dbReference>
<dbReference type="SUPFAM" id="SSF88697">
    <property type="entry name" value="PUA domain-like"/>
    <property type="match status" value="1"/>
</dbReference>
<dbReference type="PROSITE" id="PS00902">
    <property type="entry name" value="GLUTAMATE_5_KINASE"/>
    <property type="match status" value="1"/>
</dbReference>
<dbReference type="PROSITE" id="PS50890">
    <property type="entry name" value="PUA"/>
    <property type="match status" value="1"/>
</dbReference>
<accession>P0A7B5</accession>
<accession>P07005</accession>
<accession>P78293</accession>
<gene>
    <name evidence="1" type="primary">proB</name>
    <name type="ordered locus">b0242</name>
    <name type="ordered locus">JW0232</name>
</gene>
<protein>
    <recommendedName>
        <fullName evidence="1">Glutamate 5-kinase</fullName>
        <ecNumber evidence="1">2.7.2.11</ecNumber>
    </recommendedName>
    <alternativeName>
        <fullName evidence="1">Gamma-glutamyl kinase</fullName>
        <shortName evidence="1">GK</shortName>
    </alternativeName>
</protein>
<evidence type="ECO:0000255" key="1">
    <source>
        <dbReference type="HAMAP-Rule" id="MF_00456"/>
    </source>
</evidence>
<evidence type="ECO:0000269" key="2">
    <source>
    </source>
</evidence>
<evidence type="ECO:0000269" key="3">
    <source>
    </source>
</evidence>
<evidence type="ECO:0000269" key="4">
    <source>
    </source>
</evidence>
<evidence type="ECO:0000305" key="5"/>
<evidence type="ECO:0007744" key="6">
    <source>
        <dbReference type="PDB" id="2J5T"/>
    </source>
</evidence>
<evidence type="ECO:0007744" key="7">
    <source>
        <dbReference type="PDB" id="2J5V"/>
    </source>
</evidence>
<evidence type="ECO:0007829" key="8">
    <source>
        <dbReference type="PDB" id="2J5V"/>
    </source>
</evidence>
<evidence type="ECO:0007829" key="9">
    <source>
        <dbReference type="PDB" id="2W21"/>
    </source>
</evidence>
<evidence type="ECO:0007829" key="10">
    <source>
        <dbReference type="PDB" id="8ZRI"/>
    </source>
</evidence>
<name>PROB_ECOLI</name>
<reference key="1">
    <citation type="journal article" date="1984" name="Nucleic Acids Res.">
        <title>Analysis of the Escherichia coli proBA locus by DNA and protein sequencing.</title>
        <authorList>
            <person name="Deutch A.H."/>
            <person name="Rushlow K.E."/>
            <person name="Smith C.J."/>
        </authorList>
    </citation>
    <scope>NUCLEOTIDE SEQUENCE [GENOMIC DNA]</scope>
    <scope>PROTEIN SEQUENCE OF 1-6 AND 8-12</scope>
</reference>
<reference key="2">
    <citation type="submission" date="1996-02" db="EMBL/GenBank/DDBJ databases">
        <title>Systematic sequencing of the Escherichia coli genome: analysis of the 4.0 - 6.0 min (189,987 - 281,416bp) region.</title>
        <authorList>
            <person name="Takemoto K."/>
            <person name="Mori H."/>
            <person name="Murayama N."/>
            <person name="Kataoka K."/>
            <person name="Yano M."/>
            <person name="Itoh T."/>
            <person name="Yamamoto Y."/>
            <person name="Inokuchi H."/>
            <person name="Miki T."/>
            <person name="Hatada E."/>
            <person name="Fukuda R."/>
            <person name="Ichihara S."/>
            <person name="Mizuno T."/>
            <person name="Makino K."/>
            <person name="Nakata A."/>
            <person name="Yura T."/>
            <person name="Sampei G."/>
            <person name="Mizobuchi K."/>
        </authorList>
    </citation>
    <scope>NUCLEOTIDE SEQUENCE [LARGE SCALE GENOMIC DNA]</scope>
    <source>
        <strain>K12 / W3110 / ATCC 27325 / DSM 5911</strain>
    </source>
</reference>
<reference key="3">
    <citation type="submission" date="1997-01" db="EMBL/GenBank/DDBJ databases">
        <title>Sequence of minutes 4-25 of Escherichia coli.</title>
        <authorList>
            <person name="Chung E."/>
            <person name="Allen E."/>
            <person name="Araujo R."/>
            <person name="Aparicio A.M."/>
            <person name="Davis K."/>
            <person name="Duncan M."/>
            <person name="Federspiel N."/>
            <person name="Hyman R."/>
            <person name="Kalman S."/>
            <person name="Komp C."/>
            <person name="Kurdi O."/>
            <person name="Lew H."/>
            <person name="Lin D."/>
            <person name="Namath A."/>
            <person name="Oefner P."/>
            <person name="Roberts D."/>
            <person name="Schramm S."/>
            <person name="Davis R.W."/>
        </authorList>
    </citation>
    <scope>NUCLEOTIDE SEQUENCE [LARGE SCALE GENOMIC DNA]</scope>
    <source>
        <strain>K12 / MG1655 / ATCC 47076</strain>
    </source>
</reference>
<reference key="4">
    <citation type="journal article" date="1997" name="Science">
        <title>The complete genome sequence of Escherichia coli K-12.</title>
        <authorList>
            <person name="Blattner F.R."/>
            <person name="Plunkett G. III"/>
            <person name="Bloch C.A."/>
            <person name="Perna N.T."/>
            <person name="Burland V."/>
            <person name="Riley M."/>
            <person name="Collado-Vides J."/>
            <person name="Glasner J.D."/>
            <person name="Rode C.K."/>
            <person name="Mayhew G.F."/>
            <person name="Gregor J."/>
            <person name="Davis N.W."/>
            <person name="Kirkpatrick H.A."/>
            <person name="Goeden M.A."/>
            <person name="Rose D.J."/>
            <person name="Mau B."/>
            <person name="Shao Y."/>
        </authorList>
    </citation>
    <scope>NUCLEOTIDE SEQUENCE [LARGE SCALE GENOMIC DNA]</scope>
    <source>
        <strain>K12 / MG1655 / ATCC 47076</strain>
    </source>
</reference>
<reference key="5">
    <citation type="journal article" date="2006" name="Mol. Syst. Biol.">
        <title>Highly accurate genome sequences of Escherichia coli K-12 strains MG1655 and W3110.</title>
        <authorList>
            <person name="Hayashi K."/>
            <person name="Morooka N."/>
            <person name="Yamamoto Y."/>
            <person name="Fujita K."/>
            <person name="Isono K."/>
            <person name="Choi S."/>
            <person name="Ohtsubo E."/>
            <person name="Baba T."/>
            <person name="Wanner B.L."/>
            <person name="Mori H."/>
            <person name="Horiuchi T."/>
        </authorList>
    </citation>
    <scope>NUCLEOTIDE SEQUENCE [LARGE SCALE GENOMIC DNA]</scope>
    <scope>SEQUENCE REVISION TO 143</scope>
    <source>
        <strain>K12 / W3110 / ATCC 27325 / DSM 5911</strain>
    </source>
</reference>
<reference key="6">
    <citation type="journal article" date="1983" name="J. Mol. Biol.">
        <title>Complete nucleotide sequence of phoE, the structural gene for the phosphate limitation inducible outer membrane pore protein of Escherichia coli K12.</title>
        <authorList>
            <person name="Overbeeke N."/>
            <person name="Bergmans H."/>
            <person name="van Mansfeld F."/>
            <person name="Lugtenberg B."/>
        </authorList>
    </citation>
    <scope>NUCLEOTIDE SEQUENCE [GENOMIC DNA] OF 1-62</scope>
    <source>
        <strain>K12</strain>
    </source>
</reference>
<reference key="7">
    <citation type="journal article" date="1984" name="J. Bacteriol.">
        <title>Purification and characteristics of a gamma-glutamyl kinase involved in Escherichia coli proline biosynthesis.</title>
        <authorList>
            <person name="Smith C.J."/>
            <person name="Deutch A.H."/>
            <person name="Rushlow K.E."/>
        </authorList>
    </citation>
    <scope>FUNCTION</scope>
    <scope>CATALYTIC ACTIVITY</scope>
    <scope>ACTIVITY REGULATION</scope>
    <scope>BIOPHYSICOCHEMICAL PROPERTIES</scope>
    <scope>PATHWAY</scope>
    <scope>SUBUNIT</scope>
</reference>
<reference key="8">
    <citation type="journal article" date="2005" name="FEBS Lett.">
        <title>Dissection of Escherichia coli glutamate 5-kinase: functional impact of the deletion of the PUA domain.</title>
        <authorList>
            <person name="Perez-Arellano I."/>
            <person name="Rubio V."/>
            <person name="Cervera J."/>
        </authorList>
    </citation>
    <scope>ACTIVITY REGULATION</scope>
    <scope>SUBUNIT</scope>
    <scope>DOMAIN</scope>
</reference>
<reference key="9">
    <citation type="journal article" date="2007" name="J. Mol. Biol.">
        <title>A novel two-domain architecture within the amino acid kinase enzyme family revealed by the crystal structure of Escherichia coli glutamate 5-kinase.</title>
        <authorList>
            <person name="Marco-Marin C."/>
            <person name="Gil-Ortiz F."/>
            <person name="Perez-Arellano I."/>
            <person name="Cervera J."/>
            <person name="Fita I."/>
            <person name="Rubio V."/>
        </authorList>
    </citation>
    <scope>X-RAY CRYSTALLOGRAPHY (2.5 ANGSTROMS) IN COMPLEXES WITH 5-OXOPROLINE AND D-GAMMA-GLUTAMYL PHOSPHATE</scope>
    <scope>SUBUNIT</scope>
</reference>
<comment type="function">
    <text evidence="1 4">Catalyzes the transfer of a phosphate group to glutamate to form L-glutamate 5-phosphate.</text>
</comment>
<comment type="catalytic activity">
    <reaction evidence="1 4">
        <text>L-glutamate + ATP = L-glutamyl 5-phosphate + ADP</text>
        <dbReference type="Rhea" id="RHEA:14877"/>
        <dbReference type="ChEBI" id="CHEBI:29985"/>
        <dbReference type="ChEBI" id="CHEBI:30616"/>
        <dbReference type="ChEBI" id="CHEBI:58274"/>
        <dbReference type="ChEBI" id="CHEBI:456216"/>
        <dbReference type="EC" id="2.7.2.11"/>
    </reaction>
</comment>
<comment type="activity regulation">
    <text evidence="2 4">Interaction with gamma-glutamyl phosphate reductase (proA) seems necessary for kinase activity. Requires free Mg(2+). Inhibited by proline and ADP.</text>
</comment>
<comment type="biophysicochemical properties">
    <phDependence>
        <text evidence="4">Optimum pH is 6.5-7.0.</text>
    </phDependence>
</comment>
<comment type="pathway">
    <text evidence="1 4">Amino-acid biosynthesis; L-proline biosynthesis; L-glutamate 5-semialdehyde from L-glutamate: step 1/2.</text>
</comment>
<comment type="subunit">
    <text evidence="2 3 4">Homotetramer. Dimer of dimers. May form a complex with gamma-glutamyl phosphate reductase (proA).</text>
</comment>
<comment type="subcellular location">
    <subcellularLocation>
        <location evidence="1">Cytoplasm</location>
    </subcellularLocation>
</comment>
<comment type="domain">
    <text evidence="2">Contains an N-terminal amino acid kinase (AAK) domain and a C-terminal PUA domain. The AAK domain is responsible for catalyzing the reaction and for proline and ADP inhibition. The PUA domain modulates the catalytic and regulatory functions of the AAK domain.</text>
</comment>
<comment type="similarity">
    <text evidence="1">Belongs to the glutamate 5-kinase family.</text>
</comment>
<feature type="chain" id="PRO_0000109669" description="Glutamate 5-kinase">
    <location>
        <begin position="1"/>
        <end position="367"/>
    </location>
</feature>
<feature type="domain" description="PUA" evidence="1">
    <location>
        <begin position="275"/>
        <end position="353"/>
    </location>
</feature>
<feature type="binding site" evidence="5">
    <location>
        <position position="10"/>
    </location>
    <ligand>
        <name>ATP</name>
        <dbReference type="ChEBI" id="CHEBI:30616"/>
    </ligand>
</feature>
<feature type="binding site" evidence="3 6 7">
    <location>
        <position position="50"/>
    </location>
    <ligand>
        <name>substrate</name>
    </ligand>
</feature>
<feature type="binding site" evidence="3 6 7">
    <location>
        <position position="137"/>
    </location>
    <ligand>
        <name>substrate</name>
    </ligand>
</feature>
<feature type="binding site" evidence="3 6 7">
    <location>
        <position position="149"/>
    </location>
    <ligand>
        <name>substrate</name>
    </ligand>
</feature>
<feature type="binding site" evidence="5">
    <location>
        <begin position="169"/>
        <end position="170"/>
    </location>
    <ligand>
        <name>ATP</name>
        <dbReference type="ChEBI" id="CHEBI:30616"/>
    </ligand>
</feature>
<feature type="binding site" evidence="5">
    <location>
        <begin position="211"/>
        <end position="217"/>
    </location>
    <ligand>
        <name>ATP</name>
        <dbReference type="ChEBI" id="CHEBI:30616"/>
    </ligand>
</feature>
<feature type="sequence conflict" description="In Ref. 1 and 2." evidence="5" ref="1 2">
    <original>E</original>
    <variation>A</variation>
    <location>
        <position position="143"/>
    </location>
</feature>
<feature type="strand" evidence="8">
    <location>
        <begin position="6"/>
        <end position="11"/>
    </location>
</feature>
<feature type="helix" evidence="8">
    <location>
        <begin position="13"/>
        <end position="16"/>
    </location>
</feature>
<feature type="turn" evidence="8">
    <location>
        <begin position="17"/>
        <end position="19"/>
    </location>
</feature>
<feature type="strand" evidence="8">
    <location>
        <begin position="20"/>
        <end position="22"/>
    </location>
</feature>
<feature type="helix" evidence="8">
    <location>
        <begin position="25"/>
        <end position="40"/>
    </location>
</feature>
<feature type="strand" evidence="8">
    <location>
        <begin position="44"/>
        <end position="49"/>
    </location>
</feature>
<feature type="helix" evidence="8">
    <location>
        <begin position="52"/>
        <end position="60"/>
    </location>
</feature>
<feature type="helix" evidence="8">
    <location>
        <begin position="69"/>
        <end position="92"/>
    </location>
</feature>
<feature type="turn" evidence="8">
    <location>
        <begin position="93"/>
        <end position="95"/>
    </location>
</feature>
<feature type="strand" evidence="8">
    <location>
        <begin position="98"/>
        <end position="103"/>
    </location>
</feature>
<feature type="helix" evidence="8">
    <location>
        <begin position="105"/>
        <end position="108"/>
    </location>
</feature>
<feature type="helix" evidence="8">
    <location>
        <begin position="111"/>
        <end position="126"/>
    </location>
</feature>
<feature type="strand" evidence="8">
    <location>
        <begin position="130"/>
        <end position="135"/>
    </location>
</feature>
<feature type="turn" evidence="9">
    <location>
        <begin position="137"/>
        <end position="139"/>
    </location>
</feature>
<feature type="helix" evidence="8">
    <location>
        <begin position="142"/>
        <end position="144"/>
    </location>
</feature>
<feature type="helix" evidence="8">
    <location>
        <begin position="149"/>
        <end position="160"/>
    </location>
</feature>
<feature type="strand" evidence="8">
    <location>
        <begin position="163"/>
        <end position="169"/>
    </location>
</feature>
<feature type="strand" evidence="10">
    <location>
        <begin position="175"/>
        <end position="177"/>
    </location>
</feature>
<feature type="turn" evidence="10">
    <location>
        <begin position="179"/>
        <end position="181"/>
    </location>
</feature>
<feature type="strand" evidence="10">
    <location>
        <begin position="190"/>
        <end position="192"/>
    </location>
</feature>
<feature type="helix" evidence="10">
    <location>
        <begin position="196"/>
        <end position="201"/>
    </location>
</feature>
<feature type="helix" evidence="8">
    <location>
        <begin position="215"/>
        <end position="226"/>
    </location>
</feature>
<feature type="strand" evidence="8">
    <location>
        <begin position="230"/>
        <end position="235"/>
    </location>
</feature>
<feature type="helix" evidence="8">
    <location>
        <begin position="241"/>
        <end position="247"/>
    </location>
</feature>
<feature type="strand" evidence="8">
    <location>
        <begin position="252"/>
        <end position="255"/>
    </location>
</feature>
<feature type="helix" evidence="8">
    <location>
        <begin position="264"/>
        <end position="270"/>
    </location>
</feature>
<feature type="strand" evidence="8">
    <location>
        <begin position="277"/>
        <end position="280"/>
    </location>
</feature>
<feature type="helix" evidence="8">
    <location>
        <begin position="282"/>
        <end position="291"/>
    </location>
</feature>
<feature type="helix" evidence="8">
    <location>
        <begin position="297"/>
        <end position="299"/>
    </location>
</feature>
<feature type="strand" evidence="8">
    <location>
        <begin position="300"/>
        <end position="305"/>
    </location>
</feature>
<feature type="strand" evidence="8">
    <location>
        <begin position="312"/>
        <end position="317"/>
    </location>
</feature>
<feature type="strand" evidence="8">
    <location>
        <begin position="322"/>
        <end position="327"/>
    </location>
</feature>
<feature type="helix" evidence="8">
    <location>
        <begin position="332"/>
        <end position="338"/>
    </location>
</feature>
<feature type="helix" evidence="8">
    <location>
        <begin position="343"/>
        <end position="345"/>
    </location>
</feature>
<feature type="helix" evidence="8">
    <location>
        <begin position="346"/>
        <end position="350"/>
    </location>
</feature>
<feature type="helix" evidence="8">
    <location>
        <begin position="361"/>
        <end position="363"/>
    </location>
</feature>
<feature type="strand" evidence="8">
    <location>
        <begin position="364"/>
        <end position="366"/>
    </location>
</feature>